<name>RS5_IGNH4</name>
<reference key="1">
    <citation type="journal article" date="2008" name="Genome Biol.">
        <title>A genomic analysis of the archaeal system Ignicoccus hospitalis-Nanoarchaeum equitans.</title>
        <authorList>
            <person name="Podar M."/>
            <person name="Anderson I."/>
            <person name="Makarova K.S."/>
            <person name="Elkins J.G."/>
            <person name="Ivanova N."/>
            <person name="Wall M.A."/>
            <person name="Lykidis A."/>
            <person name="Mavromatis K."/>
            <person name="Sun H."/>
            <person name="Hudson M.E."/>
            <person name="Chen W."/>
            <person name="Deciu C."/>
            <person name="Hutchison D."/>
            <person name="Eads J.R."/>
            <person name="Anderson A."/>
            <person name="Fernandes F."/>
            <person name="Szeto E."/>
            <person name="Lapidus A."/>
            <person name="Kyrpides N.C."/>
            <person name="Saier M.H. Jr."/>
            <person name="Richardson P.M."/>
            <person name="Rachel R."/>
            <person name="Huber H."/>
            <person name="Eisen J.A."/>
            <person name="Koonin E.V."/>
            <person name="Keller M."/>
            <person name="Stetter K.O."/>
        </authorList>
    </citation>
    <scope>NUCLEOTIDE SEQUENCE [LARGE SCALE GENOMIC DNA]</scope>
    <source>
        <strain>KIN4/I / DSM 18386 / JCM 14125</strain>
    </source>
</reference>
<comment type="function">
    <text evidence="1">With S4 and S12 plays an important role in translational accuracy.</text>
</comment>
<comment type="subunit">
    <text evidence="1">Part of the 30S ribosomal subunit. Contacts protein S4.</text>
</comment>
<comment type="domain">
    <text>The N-terminal domain interacts with the head of the 30S subunit; the C-terminal domain interacts with the body and contacts protein S4. The interaction surface between S4 and S5 is involved in control of translational fidelity.</text>
</comment>
<comment type="similarity">
    <text evidence="1">Belongs to the universal ribosomal protein uS5 family.</text>
</comment>
<protein>
    <recommendedName>
        <fullName evidence="1">Small ribosomal subunit protein uS5</fullName>
    </recommendedName>
    <alternativeName>
        <fullName evidence="2">30S ribosomal protein S5</fullName>
    </alternativeName>
</protein>
<gene>
    <name evidence="1" type="primary">rps5</name>
    <name type="ordered locus">Igni_1276</name>
</gene>
<organism>
    <name type="scientific">Ignicoccus hospitalis (strain KIN4/I / DSM 18386 / JCM 14125)</name>
    <dbReference type="NCBI Taxonomy" id="453591"/>
    <lineage>
        <taxon>Archaea</taxon>
        <taxon>Thermoproteota</taxon>
        <taxon>Thermoprotei</taxon>
        <taxon>Desulfurococcales</taxon>
        <taxon>Desulfurococcaceae</taxon>
        <taxon>Ignicoccus</taxon>
    </lineage>
</organism>
<dbReference type="EMBL" id="CP000816">
    <property type="protein sequence ID" value="ABU82452.1"/>
    <property type="molecule type" value="Genomic_DNA"/>
</dbReference>
<dbReference type="RefSeq" id="WP_012123416.1">
    <property type="nucleotide sequence ID" value="NC_009776.1"/>
</dbReference>
<dbReference type="SMR" id="A8AC00"/>
<dbReference type="STRING" id="453591.Igni_1276"/>
<dbReference type="GeneID" id="5562728"/>
<dbReference type="KEGG" id="iho:Igni_1276"/>
<dbReference type="eggNOG" id="arCOG04087">
    <property type="taxonomic scope" value="Archaea"/>
</dbReference>
<dbReference type="HOGENOM" id="CLU_065898_0_1_2"/>
<dbReference type="OrthoDB" id="38155at2157"/>
<dbReference type="PhylomeDB" id="A8AC00"/>
<dbReference type="Proteomes" id="UP000000262">
    <property type="component" value="Chromosome"/>
</dbReference>
<dbReference type="GO" id="GO:0022627">
    <property type="term" value="C:cytosolic small ribosomal subunit"/>
    <property type="evidence" value="ECO:0007669"/>
    <property type="project" value="TreeGrafter"/>
</dbReference>
<dbReference type="GO" id="GO:0019843">
    <property type="term" value="F:rRNA binding"/>
    <property type="evidence" value="ECO:0007669"/>
    <property type="project" value="UniProtKB-UniRule"/>
</dbReference>
<dbReference type="GO" id="GO:0003735">
    <property type="term" value="F:structural constituent of ribosome"/>
    <property type="evidence" value="ECO:0007669"/>
    <property type="project" value="InterPro"/>
</dbReference>
<dbReference type="GO" id="GO:0006412">
    <property type="term" value="P:translation"/>
    <property type="evidence" value="ECO:0007669"/>
    <property type="project" value="UniProtKB-UniRule"/>
</dbReference>
<dbReference type="FunFam" id="3.30.160.20:FF:000002">
    <property type="entry name" value="40S ribosomal protein S2"/>
    <property type="match status" value="1"/>
</dbReference>
<dbReference type="FunFam" id="3.30.230.10:FF:000004">
    <property type="entry name" value="40S ribosomal protein S2"/>
    <property type="match status" value="1"/>
</dbReference>
<dbReference type="Gene3D" id="3.30.160.20">
    <property type="match status" value="1"/>
</dbReference>
<dbReference type="Gene3D" id="3.30.230.10">
    <property type="match status" value="1"/>
</dbReference>
<dbReference type="HAMAP" id="MF_01307_A">
    <property type="entry name" value="Ribosomal_uS5_A"/>
    <property type="match status" value="1"/>
</dbReference>
<dbReference type="InterPro" id="IPR020568">
    <property type="entry name" value="Ribosomal_Su5_D2-typ_SF"/>
</dbReference>
<dbReference type="InterPro" id="IPR000851">
    <property type="entry name" value="Ribosomal_uS5"/>
</dbReference>
<dbReference type="InterPro" id="IPR047866">
    <property type="entry name" value="Ribosomal_uS5_arc"/>
</dbReference>
<dbReference type="InterPro" id="IPR005324">
    <property type="entry name" value="Ribosomal_uS5_C"/>
</dbReference>
<dbReference type="InterPro" id="IPR005711">
    <property type="entry name" value="Ribosomal_uS5_euk/arc"/>
</dbReference>
<dbReference type="InterPro" id="IPR013810">
    <property type="entry name" value="Ribosomal_uS5_N"/>
</dbReference>
<dbReference type="InterPro" id="IPR014721">
    <property type="entry name" value="Ribsml_uS5_D2-typ_fold_subgr"/>
</dbReference>
<dbReference type="NCBIfam" id="NF003125">
    <property type="entry name" value="PRK04044.1"/>
    <property type="match status" value="1"/>
</dbReference>
<dbReference type="NCBIfam" id="TIGR01020">
    <property type="entry name" value="uS5_euk_arch"/>
    <property type="match status" value="1"/>
</dbReference>
<dbReference type="PANTHER" id="PTHR13718:SF4">
    <property type="entry name" value="40S RIBOSOMAL PROTEIN S2"/>
    <property type="match status" value="1"/>
</dbReference>
<dbReference type="PANTHER" id="PTHR13718">
    <property type="entry name" value="RIBOSOMAL S SUBUNIT"/>
    <property type="match status" value="1"/>
</dbReference>
<dbReference type="Pfam" id="PF00333">
    <property type="entry name" value="Ribosomal_S5"/>
    <property type="match status" value="1"/>
</dbReference>
<dbReference type="Pfam" id="PF03719">
    <property type="entry name" value="Ribosomal_S5_C"/>
    <property type="match status" value="1"/>
</dbReference>
<dbReference type="SUPFAM" id="SSF54768">
    <property type="entry name" value="dsRNA-binding domain-like"/>
    <property type="match status" value="1"/>
</dbReference>
<dbReference type="SUPFAM" id="SSF54211">
    <property type="entry name" value="Ribosomal protein S5 domain 2-like"/>
    <property type="match status" value="1"/>
</dbReference>
<dbReference type="PROSITE" id="PS50881">
    <property type="entry name" value="S5_DSRBD"/>
    <property type="match status" value="1"/>
</dbReference>
<keyword id="KW-1185">Reference proteome</keyword>
<keyword id="KW-0687">Ribonucleoprotein</keyword>
<keyword id="KW-0689">Ribosomal protein</keyword>
<keyword id="KW-0694">RNA-binding</keyword>
<keyword id="KW-0699">rRNA-binding</keyword>
<sequence length="211" mass="23325">MAVTVSAEEWVPRTRVGRMVKEGKITSIYELFEKNLPILEPEIVDYLVPDLKHEVLDVSLVQKVTDAGRVTRLRVLVVIGNEDGLVGLGMGKAKQMRFAIQKALANAKLNITPVRRGCGSWECTCGEPHSVPFTVRGKSGSVEVILKPAPRGTGLVAGDVAKAVLRYAGIKDVWTHTEGETRTTHNFAKATFNALKQTYKFLAPWDWVQQQ</sequence>
<proteinExistence type="inferred from homology"/>
<feature type="chain" id="PRO_0000323228" description="Small ribosomal subunit protein uS5">
    <location>
        <begin position="1"/>
        <end position="211"/>
    </location>
</feature>
<feature type="domain" description="S5 DRBM" evidence="1">
    <location>
        <begin position="51"/>
        <end position="114"/>
    </location>
</feature>
<accession>A8AC00</accession>
<evidence type="ECO:0000255" key="1">
    <source>
        <dbReference type="HAMAP-Rule" id="MF_01307"/>
    </source>
</evidence>
<evidence type="ECO:0000305" key="2"/>